<protein>
    <recommendedName>
        <fullName evidence="1">Photosystem II extrinsic protein V</fullName>
        <shortName evidence="1">PsbV</shortName>
    </recommendedName>
    <alternativeName>
        <fullName evidence="1">Cytochrome c-550</fullName>
    </alternativeName>
    <alternativeName>
        <fullName evidence="1">Cytochrome c550</fullName>
    </alternativeName>
    <alternativeName>
        <fullName evidence="1">Low-potential cytochrome c</fullName>
    </alternativeName>
</protein>
<feature type="signal peptide" evidence="1">
    <location>
        <begin position="1"/>
        <end position="38"/>
    </location>
</feature>
<feature type="chain" id="PRO_0000295606" description="Photosystem II extrinsic protein V">
    <location>
        <begin position="39"/>
        <end position="178"/>
    </location>
</feature>
<feature type="binding site" description="covalent" evidence="1">
    <location>
        <position position="71"/>
    </location>
    <ligand>
        <name>heme c</name>
        <dbReference type="ChEBI" id="CHEBI:61717"/>
    </ligand>
</feature>
<feature type="binding site" description="covalent" evidence="1">
    <location>
        <position position="74"/>
    </location>
    <ligand>
        <name>heme c</name>
        <dbReference type="ChEBI" id="CHEBI:61717"/>
    </ligand>
</feature>
<feature type="binding site" description="axial binding residue" evidence="1">
    <location>
        <position position="75"/>
    </location>
    <ligand>
        <name>heme c</name>
        <dbReference type="ChEBI" id="CHEBI:61717"/>
    </ligand>
    <ligandPart>
        <name>Fe</name>
        <dbReference type="ChEBI" id="CHEBI:18248"/>
    </ligandPart>
</feature>
<feature type="binding site" description="axial binding residue" evidence="1">
    <location>
        <position position="126"/>
    </location>
    <ligand>
        <name>heme c</name>
        <dbReference type="ChEBI" id="CHEBI:61717"/>
    </ligand>
    <ligandPart>
        <name>Fe</name>
        <dbReference type="ChEBI" id="CHEBI:18248"/>
    </ligandPart>
</feature>
<proteinExistence type="inferred from homology"/>
<organism>
    <name type="scientific">Synechococcus sp. (strain JA-3-3Ab)</name>
    <name type="common">Cyanobacteria bacterium Yellowstone A-Prime</name>
    <dbReference type="NCBI Taxonomy" id="321327"/>
    <lineage>
        <taxon>Bacteria</taxon>
        <taxon>Bacillati</taxon>
        <taxon>Cyanobacteriota</taxon>
        <taxon>Cyanophyceae</taxon>
        <taxon>Synechococcales</taxon>
        <taxon>Synechococcaceae</taxon>
        <taxon>Synechococcus</taxon>
    </lineage>
</organism>
<accession>Q2JTY6</accession>
<dbReference type="EMBL" id="CP000239">
    <property type="protein sequence ID" value="ABC99843.1"/>
    <property type="molecule type" value="Genomic_DNA"/>
</dbReference>
<dbReference type="RefSeq" id="WP_011430519.1">
    <property type="nucleotide sequence ID" value="NC_007775.1"/>
</dbReference>
<dbReference type="SMR" id="Q2JTY6"/>
<dbReference type="STRING" id="321327.CYA_1687"/>
<dbReference type="KEGG" id="cya:CYA_1687"/>
<dbReference type="eggNOG" id="COG2010">
    <property type="taxonomic scope" value="Bacteria"/>
</dbReference>
<dbReference type="HOGENOM" id="CLU_104149_0_0_3"/>
<dbReference type="OrthoDB" id="486949at2"/>
<dbReference type="Proteomes" id="UP000008818">
    <property type="component" value="Chromosome"/>
</dbReference>
<dbReference type="GO" id="GO:0009523">
    <property type="term" value="C:photosystem II"/>
    <property type="evidence" value="ECO:0007669"/>
    <property type="project" value="UniProtKB-KW"/>
</dbReference>
<dbReference type="GO" id="GO:0031676">
    <property type="term" value="C:plasma membrane-derived thylakoid membrane"/>
    <property type="evidence" value="ECO:0007669"/>
    <property type="project" value="UniProtKB-SubCell"/>
</dbReference>
<dbReference type="GO" id="GO:0009055">
    <property type="term" value="F:electron transfer activity"/>
    <property type="evidence" value="ECO:0007669"/>
    <property type="project" value="InterPro"/>
</dbReference>
<dbReference type="GO" id="GO:0020037">
    <property type="term" value="F:heme binding"/>
    <property type="evidence" value="ECO:0007669"/>
    <property type="project" value="InterPro"/>
</dbReference>
<dbReference type="GO" id="GO:0046872">
    <property type="term" value="F:metal ion binding"/>
    <property type="evidence" value="ECO:0007669"/>
    <property type="project" value="UniProtKB-KW"/>
</dbReference>
<dbReference type="GO" id="GO:0019684">
    <property type="term" value="P:photosynthesis, light reaction"/>
    <property type="evidence" value="ECO:0007669"/>
    <property type="project" value="UniProtKB-UniRule"/>
</dbReference>
<dbReference type="Gene3D" id="1.10.760.10">
    <property type="entry name" value="Cytochrome c-like domain"/>
    <property type="match status" value="1"/>
</dbReference>
<dbReference type="HAMAP" id="MF_01378">
    <property type="entry name" value="PSII_Cyt550"/>
    <property type="match status" value="1"/>
</dbReference>
<dbReference type="InterPro" id="IPR009056">
    <property type="entry name" value="Cyt_c-like_dom"/>
</dbReference>
<dbReference type="InterPro" id="IPR036909">
    <property type="entry name" value="Cyt_c-like_dom_sf"/>
</dbReference>
<dbReference type="InterPro" id="IPR029490">
    <property type="entry name" value="Cytochrom_C550"/>
</dbReference>
<dbReference type="InterPro" id="IPR017851">
    <property type="entry name" value="PsbV_cyt_c550"/>
</dbReference>
<dbReference type="NCBIfam" id="TIGR03045">
    <property type="entry name" value="PS_II_C550"/>
    <property type="match status" value="1"/>
</dbReference>
<dbReference type="Pfam" id="PF14495">
    <property type="entry name" value="Cytochrom_C550"/>
    <property type="match status" value="1"/>
</dbReference>
<dbReference type="SUPFAM" id="SSF46626">
    <property type="entry name" value="Cytochrome c"/>
    <property type="match status" value="1"/>
</dbReference>
<dbReference type="PROSITE" id="PS51007">
    <property type="entry name" value="CYTC"/>
    <property type="match status" value="1"/>
</dbReference>
<gene>
    <name evidence="1" type="primary">psbV</name>
    <name type="ordered locus">CYA_1687</name>
</gene>
<sequence length="178" mass="19535">MFSKFFSLQKAFAAARRRLLILILVLGMAGYAWGPALAARQIPPVALSPTESITFTEAQLARGKQLFNRACAQCHVGGQTYPNPDVTLKLSDLEGATPPRDNVLAIVDYIKNPVTYDGVESLVEYHPNTQLLSEYPRLRNLTDEDLKLIAGYILVQAKTVPGWGGTKSESHSDLSAYL</sequence>
<evidence type="ECO:0000255" key="1">
    <source>
        <dbReference type="HAMAP-Rule" id="MF_01378"/>
    </source>
</evidence>
<keyword id="KW-0249">Electron transport</keyword>
<keyword id="KW-0349">Heme</keyword>
<keyword id="KW-0408">Iron</keyword>
<keyword id="KW-0472">Membrane</keyword>
<keyword id="KW-0479">Metal-binding</keyword>
<keyword id="KW-0602">Photosynthesis</keyword>
<keyword id="KW-0604">Photosystem II</keyword>
<keyword id="KW-0732">Signal</keyword>
<keyword id="KW-0793">Thylakoid</keyword>
<keyword id="KW-0813">Transport</keyword>
<reference key="1">
    <citation type="journal article" date="2007" name="ISME J.">
        <title>Population level functional diversity in a microbial community revealed by comparative genomic and metagenomic analyses.</title>
        <authorList>
            <person name="Bhaya D."/>
            <person name="Grossman A.R."/>
            <person name="Steunou A.-S."/>
            <person name="Khuri N."/>
            <person name="Cohan F.M."/>
            <person name="Hamamura N."/>
            <person name="Melendrez M.C."/>
            <person name="Bateson M.M."/>
            <person name="Ward D.M."/>
            <person name="Heidelberg J.F."/>
        </authorList>
    </citation>
    <scope>NUCLEOTIDE SEQUENCE [LARGE SCALE GENOMIC DNA]</scope>
    <source>
        <strain>JA-3-3Ab</strain>
    </source>
</reference>
<comment type="function">
    <text evidence="1">One of the extrinsic, lumenal subunits of photosystem II (PSII). PSII is a light-driven water plastoquinone oxidoreductase, using light energy to abstract electrons from H(2)O, generating a proton gradient subsequently used for ATP formation. The extrinsic proteins stabilize the structure of photosystem II oxygen-evolving complex (OEC), the ion environment of oxygen evolution and protect the OEC against heat-induced inactivation. Low-potential cytochrome c that plays a role in the OEC of PSII.</text>
</comment>
<comment type="cofactor">
    <cofactor evidence="1">
        <name>heme c</name>
        <dbReference type="ChEBI" id="CHEBI:61717"/>
    </cofactor>
    <text evidence="1">Binds 1 heme c group covalently per subunit.</text>
</comment>
<comment type="subunit">
    <text evidence="1">PSII is composed of 1 copy each of membrane proteins PsbA, PsbB, PsbC, PsbD, PsbE, PsbF, PsbH, PsbI, PsbJ, PsbK, PsbL, PsbM, PsbT, PsbX, PsbY, PsbZ, Psb30/Ycf12, peripheral proteins PsbO, CyanoQ (PsbQ), PsbU, PsbV and a large number of cofactors. It forms dimeric complexes.</text>
</comment>
<comment type="subcellular location">
    <subcellularLocation>
        <location evidence="1">Cellular thylakoid membrane</location>
        <topology evidence="1">Peripheral membrane protein</topology>
        <orientation evidence="1">Lumenal side</orientation>
    </subcellularLocation>
    <text evidence="1">Associated with photosystem II at the lumenal side of the thylakoid membrane.</text>
</comment>
<comment type="similarity">
    <text evidence="1">Belongs to the cytochrome c family. PsbV subfamily.</text>
</comment>
<name>CY550_SYNJA</name>